<proteinExistence type="inferred from homology"/>
<sequence length="379" mass="42777">MTNIRKSHPLMKIINNSFIDLPTPSNISSWWNFGSLLGICLALQILTGLFLAMHYTSDTATAFNSVTHICRDVNYGWILRYLHANGASMFFICLYLHVGRGLYYGSYMYTETWNIGVILLFAVMATAFMGYVLPWGQMSFWGATVITNLLSAIPYIGTDLVEWIWGGFSVDKATLTRFFAFHFLLPFIIAAMVMVHLLFLHETGSNNPTGIPASADMIPFHPYYTIKDILGLLLMITALLTLVLFSPDLLGDPDNYTPANPLNTPPHIKPEWYFLFAYAILRSIPNKLGGVLALVLSILILIIIPLLHTSKQRSMTFRPLSQCLFWLLTADLFTLTWIGGQPVEHPYVIIGQLASILYFSIIIILMPLISLMENHLLKW</sequence>
<gene>
    <name type="primary">MT-CYB</name>
    <name type="synonym">COB</name>
    <name type="synonym">CYTB</name>
    <name type="synonym">MTCYB</name>
</gene>
<comment type="function">
    <text evidence="2">Component of the ubiquinol-cytochrome c reductase complex (complex III or cytochrome b-c1 complex) that is part of the mitochondrial respiratory chain. The b-c1 complex mediates electron transfer from ubiquinol to cytochrome c. Contributes to the generation of a proton gradient across the mitochondrial membrane that is then used for ATP synthesis.</text>
</comment>
<comment type="cofactor">
    <cofactor evidence="2">
        <name>heme b</name>
        <dbReference type="ChEBI" id="CHEBI:60344"/>
    </cofactor>
    <text evidence="2">Binds 2 heme b groups non-covalently.</text>
</comment>
<comment type="subunit">
    <text evidence="2">The cytochrome bc1 complex contains 11 subunits: 3 respiratory subunits (MT-CYB, CYC1 and UQCRFS1), 2 core proteins (UQCRC1 and UQCRC2) and 6 low-molecular weight proteins (UQCRH/QCR6, UQCRB/QCR7, UQCRQ/QCR8, UQCR10/QCR9, UQCR11/QCR10 and a cleavage product of UQCRFS1). This cytochrome bc1 complex then forms a dimer.</text>
</comment>
<comment type="subcellular location">
    <subcellularLocation>
        <location evidence="2">Mitochondrion inner membrane</location>
        <topology evidence="2">Multi-pass membrane protein</topology>
    </subcellularLocation>
</comment>
<comment type="miscellaneous">
    <text evidence="1">Heme 1 (or BL or b562) is low-potential and absorbs at about 562 nm, and heme 2 (or BH or b566) is high-potential and absorbs at about 566 nm.</text>
</comment>
<comment type="similarity">
    <text evidence="3 4">Belongs to the cytochrome b family.</text>
</comment>
<comment type="caution">
    <text evidence="2">The full-length protein contains only eight transmembrane helices, not nine as predicted by bioinformatics tools.</text>
</comment>
<evidence type="ECO:0000250" key="1"/>
<evidence type="ECO:0000250" key="2">
    <source>
        <dbReference type="UniProtKB" id="P00157"/>
    </source>
</evidence>
<evidence type="ECO:0000255" key="3">
    <source>
        <dbReference type="PROSITE-ProRule" id="PRU00967"/>
    </source>
</evidence>
<evidence type="ECO:0000255" key="4">
    <source>
        <dbReference type="PROSITE-ProRule" id="PRU00968"/>
    </source>
</evidence>
<keyword id="KW-0249">Electron transport</keyword>
<keyword id="KW-0349">Heme</keyword>
<keyword id="KW-0408">Iron</keyword>
<keyword id="KW-0472">Membrane</keyword>
<keyword id="KW-0479">Metal-binding</keyword>
<keyword id="KW-0496">Mitochondrion</keyword>
<keyword id="KW-0999">Mitochondrion inner membrane</keyword>
<keyword id="KW-0679">Respiratory chain</keyword>
<keyword id="KW-0812">Transmembrane</keyword>
<keyword id="KW-1133">Transmembrane helix</keyword>
<keyword id="KW-0813">Transport</keyword>
<keyword id="KW-0830">Ubiquinone</keyword>
<dbReference type="EMBL" id="AF376848">
    <property type="protein sequence ID" value="AAK57667.1"/>
    <property type="molecule type" value="Genomic_DNA"/>
</dbReference>
<dbReference type="SMR" id="Q957B4"/>
<dbReference type="GO" id="GO:0005743">
    <property type="term" value="C:mitochondrial inner membrane"/>
    <property type="evidence" value="ECO:0007669"/>
    <property type="project" value="UniProtKB-SubCell"/>
</dbReference>
<dbReference type="GO" id="GO:0045275">
    <property type="term" value="C:respiratory chain complex III"/>
    <property type="evidence" value="ECO:0007669"/>
    <property type="project" value="InterPro"/>
</dbReference>
<dbReference type="GO" id="GO:0046872">
    <property type="term" value="F:metal ion binding"/>
    <property type="evidence" value="ECO:0007669"/>
    <property type="project" value="UniProtKB-KW"/>
</dbReference>
<dbReference type="GO" id="GO:0008121">
    <property type="term" value="F:ubiquinol-cytochrome-c reductase activity"/>
    <property type="evidence" value="ECO:0007669"/>
    <property type="project" value="InterPro"/>
</dbReference>
<dbReference type="GO" id="GO:0006122">
    <property type="term" value="P:mitochondrial electron transport, ubiquinol to cytochrome c"/>
    <property type="evidence" value="ECO:0007669"/>
    <property type="project" value="TreeGrafter"/>
</dbReference>
<dbReference type="CDD" id="cd00290">
    <property type="entry name" value="cytochrome_b_C"/>
    <property type="match status" value="1"/>
</dbReference>
<dbReference type="CDD" id="cd00284">
    <property type="entry name" value="Cytochrome_b_N"/>
    <property type="match status" value="1"/>
</dbReference>
<dbReference type="FunFam" id="1.20.810.10:FF:000002">
    <property type="entry name" value="Cytochrome b"/>
    <property type="match status" value="1"/>
</dbReference>
<dbReference type="Gene3D" id="1.20.810.10">
    <property type="entry name" value="Cytochrome Bc1 Complex, Chain C"/>
    <property type="match status" value="1"/>
</dbReference>
<dbReference type="InterPro" id="IPR005798">
    <property type="entry name" value="Cyt_b/b6_C"/>
</dbReference>
<dbReference type="InterPro" id="IPR036150">
    <property type="entry name" value="Cyt_b/b6_C_sf"/>
</dbReference>
<dbReference type="InterPro" id="IPR005797">
    <property type="entry name" value="Cyt_b/b6_N"/>
</dbReference>
<dbReference type="InterPro" id="IPR027387">
    <property type="entry name" value="Cytb/b6-like_sf"/>
</dbReference>
<dbReference type="InterPro" id="IPR030689">
    <property type="entry name" value="Cytochrome_b"/>
</dbReference>
<dbReference type="InterPro" id="IPR048260">
    <property type="entry name" value="Cytochrome_b_C_euk/bac"/>
</dbReference>
<dbReference type="InterPro" id="IPR048259">
    <property type="entry name" value="Cytochrome_b_N_euk/bac"/>
</dbReference>
<dbReference type="InterPro" id="IPR016174">
    <property type="entry name" value="Di-haem_cyt_TM"/>
</dbReference>
<dbReference type="PANTHER" id="PTHR19271">
    <property type="entry name" value="CYTOCHROME B"/>
    <property type="match status" value="1"/>
</dbReference>
<dbReference type="PANTHER" id="PTHR19271:SF16">
    <property type="entry name" value="CYTOCHROME B"/>
    <property type="match status" value="1"/>
</dbReference>
<dbReference type="Pfam" id="PF00032">
    <property type="entry name" value="Cytochrom_B_C"/>
    <property type="match status" value="1"/>
</dbReference>
<dbReference type="Pfam" id="PF00033">
    <property type="entry name" value="Cytochrome_B"/>
    <property type="match status" value="1"/>
</dbReference>
<dbReference type="PIRSF" id="PIRSF038885">
    <property type="entry name" value="COB"/>
    <property type="match status" value="1"/>
</dbReference>
<dbReference type="SUPFAM" id="SSF81648">
    <property type="entry name" value="a domain/subunit of cytochrome bc1 complex (Ubiquinol-cytochrome c reductase)"/>
    <property type="match status" value="1"/>
</dbReference>
<dbReference type="SUPFAM" id="SSF81342">
    <property type="entry name" value="Transmembrane di-heme cytochromes"/>
    <property type="match status" value="1"/>
</dbReference>
<dbReference type="PROSITE" id="PS51003">
    <property type="entry name" value="CYTB_CTER"/>
    <property type="match status" value="1"/>
</dbReference>
<dbReference type="PROSITE" id="PS51002">
    <property type="entry name" value="CYTB_NTER"/>
    <property type="match status" value="1"/>
</dbReference>
<protein>
    <recommendedName>
        <fullName>Cytochrome b</fullName>
    </recommendedName>
    <alternativeName>
        <fullName>Complex III subunit 3</fullName>
    </alternativeName>
    <alternativeName>
        <fullName>Complex III subunit III</fullName>
    </alternativeName>
    <alternativeName>
        <fullName>Cytochrome b-c1 complex subunit 3</fullName>
    </alternativeName>
    <alternativeName>
        <fullName>Ubiquinol-cytochrome-c reductase complex cytochrome b subunit</fullName>
    </alternativeName>
</protein>
<organism>
    <name type="scientific">Myotis dominicensis</name>
    <name type="common">Dominican myotis</name>
    <dbReference type="NCBI Taxonomy" id="159325"/>
    <lineage>
        <taxon>Eukaryota</taxon>
        <taxon>Metazoa</taxon>
        <taxon>Chordata</taxon>
        <taxon>Craniata</taxon>
        <taxon>Vertebrata</taxon>
        <taxon>Euteleostomi</taxon>
        <taxon>Mammalia</taxon>
        <taxon>Eutheria</taxon>
        <taxon>Laurasiatheria</taxon>
        <taxon>Chiroptera</taxon>
        <taxon>Yangochiroptera</taxon>
        <taxon>Vespertilionidae</taxon>
        <taxon>Myotis</taxon>
    </lineage>
</organism>
<accession>Q957B4</accession>
<feature type="chain" id="PRO_0000254723" description="Cytochrome b">
    <location>
        <begin position="1"/>
        <end position="379"/>
    </location>
</feature>
<feature type="transmembrane region" description="Helical" evidence="2">
    <location>
        <begin position="33"/>
        <end position="53"/>
    </location>
</feature>
<feature type="transmembrane region" description="Helical" evidence="2">
    <location>
        <begin position="77"/>
        <end position="98"/>
    </location>
</feature>
<feature type="transmembrane region" description="Helical" evidence="2">
    <location>
        <begin position="113"/>
        <end position="133"/>
    </location>
</feature>
<feature type="transmembrane region" description="Helical" evidence="2">
    <location>
        <begin position="178"/>
        <end position="198"/>
    </location>
</feature>
<feature type="transmembrane region" description="Helical" evidence="2">
    <location>
        <begin position="226"/>
        <end position="246"/>
    </location>
</feature>
<feature type="transmembrane region" description="Helical" evidence="2">
    <location>
        <begin position="288"/>
        <end position="308"/>
    </location>
</feature>
<feature type="transmembrane region" description="Helical" evidence="2">
    <location>
        <begin position="320"/>
        <end position="340"/>
    </location>
</feature>
<feature type="transmembrane region" description="Helical" evidence="2">
    <location>
        <begin position="347"/>
        <end position="367"/>
    </location>
</feature>
<feature type="binding site" description="axial binding residue" evidence="2">
    <location>
        <position position="83"/>
    </location>
    <ligand>
        <name>heme b</name>
        <dbReference type="ChEBI" id="CHEBI:60344"/>
        <label>b562</label>
    </ligand>
    <ligandPart>
        <name>Fe</name>
        <dbReference type="ChEBI" id="CHEBI:18248"/>
    </ligandPart>
</feature>
<feature type="binding site" description="axial binding residue" evidence="2">
    <location>
        <position position="97"/>
    </location>
    <ligand>
        <name>heme b</name>
        <dbReference type="ChEBI" id="CHEBI:60344"/>
        <label>b566</label>
    </ligand>
    <ligandPart>
        <name>Fe</name>
        <dbReference type="ChEBI" id="CHEBI:18248"/>
    </ligandPart>
</feature>
<feature type="binding site" description="axial binding residue" evidence="2">
    <location>
        <position position="182"/>
    </location>
    <ligand>
        <name>heme b</name>
        <dbReference type="ChEBI" id="CHEBI:60344"/>
        <label>b562</label>
    </ligand>
    <ligandPart>
        <name>Fe</name>
        <dbReference type="ChEBI" id="CHEBI:18248"/>
    </ligandPart>
</feature>
<feature type="binding site" description="axial binding residue" evidence="2">
    <location>
        <position position="196"/>
    </location>
    <ligand>
        <name>heme b</name>
        <dbReference type="ChEBI" id="CHEBI:60344"/>
        <label>b566</label>
    </ligand>
    <ligandPart>
        <name>Fe</name>
        <dbReference type="ChEBI" id="CHEBI:18248"/>
    </ligandPart>
</feature>
<feature type="binding site" evidence="2">
    <location>
        <position position="201"/>
    </location>
    <ligand>
        <name>a ubiquinone</name>
        <dbReference type="ChEBI" id="CHEBI:16389"/>
    </ligand>
</feature>
<name>CYB_MYODO</name>
<geneLocation type="mitochondrion"/>
<reference key="1">
    <citation type="journal article" date="2001" name="Mol. Phylogenet. Evol.">
        <title>Molecular systematics of bats of the genus Myotis (Vespertilionidae) suggests deterministic ecomorphological convergences.</title>
        <authorList>
            <person name="Ruedi M."/>
            <person name="Mayer F."/>
        </authorList>
    </citation>
    <scope>NUCLEOTIDE SEQUENCE [GENOMIC DNA]</scope>
    <source>
        <strain>Isolate TK 15613</strain>
    </source>
</reference>